<proteinExistence type="evidence at protein level"/>
<feature type="chain" id="PRO_0000059412" description="Collagen alpha-3(IV) chain">
    <location>
        <begin position="1" status="less than"/>
        <end position="471"/>
    </location>
</feature>
<feature type="domain" description="Collagen IV NC1" evidence="5">
    <location>
        <begin position="246"/>
        <end position="470"/>
    </location>
</feature>
<feature type="region of interest" description="Triple-helical region">
    <location>
        <begin position="1" status="less than"/>
        <end position="238"/>
    </location>
</feature>
<feature type="region of interest" description="Disordered" evidence="6">
    <location>
        <begin position="1"/>
        <end position="241"/>
    </location>
</feature>
<feature type="short sequence motif" description="Cell attachment site" evidence="4">
    <location>
        <begin position="106"/>
        <end position="108"/>
    </location>
</feature>
<feature type="compositionally biased region" description="Pro residues" evidence="6">
    <location>
        <begin position="52"/>
        <end position="61"/>
    </location>
</feature>
<feature type="compositionally biased region" description="Pro residues" evidence="6">
    <location>
        <begin position="127"/>
        <end position="141"/>
    </location>
</feature>
<feature type="compositionally biased region" description="Low complexity" evidence="6">
    <location>
        <begin position="165"/>
        <end position="174"/>
    </location>
</feature>
<feature type="compositionally biased region" description="Pro residues" evidence="6">
    <location>
        <begin position="175"/>
        <end position="187"/>
    </location>
</feature>
<feature type="modified residue" description="Hydroxyproline" evidence="7 8">
    <location>
        <position position="232"/>
    </location>
</feature>
<feature type="modified residue" description="Hydroxyproline" evidence="7 8">
    <location>
        <position position="238"/>
    </location>
</feature>
<feature type="disulfide bond" description="Or C-261 with C-349" evidence="5">
    <location>
        <begin position="261"/>
        <end position="352"/>
    </location>
</feature>
<feature type="disulfide bond" description="Or C-294 with C-352" evidence="5">
    <location>
        <begin position="294"/>
        <end position="349"/>
    </location>
</feature>
<feature type="disulfide bond" evidence="5">
    <location>
        <begin position="306"/>
        <end position="312"/>
    </location>
</feature>
<feature type="disulfide bond" description="Or C-371 with C-463" evidence="5">
    <location>
        <begin position="371"/>
        <end position="466"/>
    </location>
</feature>
<feature type="disulfide bond" description="Or C-405 with C-466" evidence="5">
    <location>
        <begin position="405"/>
        <end position="463"/>
    </location>
</feature>
<feature type="disulfide bond" evidence="5">
    <location>
        <begin position="417"/>
        <end position="423"/>
    </location>
</feature>
<feature type="cross-link" description="S-Lysyl-methionine sulfilimine (Met-Lys) (interchain with K-452)" evidence="1">
    <location>
        <position position="334"/>
    </location>
</feature>
<feature type="cross-link" description="S-Lysyl-methionine sulfilimine (Lys-Met) (interchain with M-334)" evidence="1">
    <location>
        <position position="452"/>
    </location>
</feature>
<feature type="sequence conflict" description="In Ref. 3; AA sequence." evidence="9" ref="3">
    <original>S</original>
    <variation>Y</variation>
    <location>
        <position position="253"/>
    </location>
</feature>
<feature type="non-terminal residue">
    <location>
        <position position="1"/>
    </location>
</feature>
<comment type="function">
    <text evidence="2 3">Type IV collagen is the major structural component of glomerular basement membranes (GBM), forming a 'chicken-wire' meshwork together with laminins, proteoglycans and entactin/nidogen.</text>
</comment>
<comment type="subunit">
    <text evidence="2 3">There are six type IV collagen isoforms, alpha 1(IV)-alpha 6(IV), each of which can form a triple helix structure with 2 other chains to generate type IV collagen network. The alpha 3(IV) chain forms a triple helical protomer with alpha 4(IV) and alpha 5(IV); this triple helical structure dimerizes through NC1-NC1 domain interactions such that the alpha 3(IV), alpha 4(IV) and alpha 5(IV) chains of one protomer connect with the alpha 5(IV), alpha 4(IV) and alpha 3(IV) chains of the opposite promoter, respectively (By similarity). Interacts with ITGB3 (By similarity). Associates with LAMB2 at the neuromuscular junction and in GBM (By similarity).</text>
</comment>
<comment type="subcellular location">
    <subcellularLocation>
        <location>Secreted</location>
        <location>Extracellular space</location>
        <location>Extracellular matrix</location>
        <location>Basement membrane</location>
    </subcellularLocation>
</comment>
<comment type="domain">
    <text>Alpha chains of type IV collagen have a non-collagenous domain (NC1) at their C-terminus, frequent interruptions of the G-X-Y repeats in the long central triple-helical domain (which may cause flexibility in the triple helix), and a short N-terminal triple-helical 7S domain.</text>
</comment>
<comment type="PTM">
    <text evidence="5 8">Prolines at the third position of the tripeptide repeating unit (G-X-Y) are hydroxylated in some or all of the chains.</text>
</comment>
<comment type="PTM">
    <text>Type IV collagens contain numerous cysteine residues which are involved in inter- and intramolecular disulfide bonding. 12 of these, located in the NC1 domain, are conserved in all known type IV collagens.</text>
</comment>
<comment type="PTM">
    <text evidence="1">The trimeric structure of the NC1 domains is stabilized by covalent bonds between Lys and Met residues.</text>
</comment>
<comment type="PTM">
    <text evidence="2">Phosphorylated. Thought to be phosphorylated by CERT, but CERT does not have kinase activity.</text>
</comment>
<comment type="similarity">
    <text evidence="5">Belongs to the type IV collagen family.</text>
</comment>
<keyword id="KW-0084">Basement membrane</keyword>
<keyword id="KW-0130">Cell adhesion</keyword>
<keyword id="KW-0176">Collagen</keyword>
<keyword id="KW-0903">Direct protein sequencing</keyword>
<keyword id="KW-1015">Disulfide bond</keyword>
<keyword id="KW-0272">Extracellular matrix</keyword>
<keyword id="KW-0379">Hydroxylation</keyword>
<keyword id="KW-1185">Reference proteome</keyword>
<keyword id="KW-0677">Repeat</keyword>
<keyword id="KW-0964">Secreted</keyword>
<accession>Q28084</accession>
<dbReference type="EMBL" id="M63139">
    <property type="protein sequence ID" value="AAA62708.1"/>
    <property type="molecule type" value="mRNA"/>
</dbReference>
<dbReference type="PIR" id="A39024">
    <property type="entry name" value="A39024"/>
</dbReference>
<dbReference type="SMR" id="Q28084"/>
<dbReference type="STRING" id="9913.ENSBTAP00000028418"/>
<dbReference type="PaxDb" id="9913-ENSBTAP00000028418"/>
<dbReference type="eggNOG" id="KOG3544">
    <property type="taxonomic scope" value="Eukaryota"/>
</dbReference>
<dbReference type="InParanoid" id="Q28084"/>
<dbReference type="OrthoDB" id="10071882at2759"/>
<dbReference type="Proteomes" id="UP000009136">
    <property type="component" value="Unplaced"/>
</dbReference>
<dbReference type="GO" id="GO:0005604">
    <property type="term" value="C:basement membrane"/>
    <property type="evidence" value="ECO:0007669"/>
    <property type="project" value="UniProtKB-SubCell"/>
</dbReference>
<dbReference type="GO" id="GO:0005581">
    <property type="term" value="C:collagen trimer"/>
    <property type="evidence" value="ECO:0007669"/>
    <property type="project" value="UniProtKB-KW"/>
</dbReference>
<dbReference type="GO" id="GO:0005576">
    <property type="term" value="C:extracellular region"/>
    <property type="evidence" value="ECO:0007669"/>
    <property type="project" value="UniProtKB-KW"/>
</dbReference>
<dbReference type="GO" id="GO:0005201">
    <property type="term" value="F:extracellular matrix structural constituent"/>
    <property type="evidence" value="ECO:0007669"/>
    <property type="project" value="InterPro"/>
</dbReference>
<dbReference type="GO" id="GO:0007155">
    <property type="term" value="P:cell adhesion"/>
    <property type="evidence" value="ECO:0007669"/>
    <property type="project" value="UniProtKB-KW"/>
</dbReference>
<dbReference type="FunFam" id="2.170.240.10:FF:000001">
    <property type="entry name" value="Collagen IV alpha 1 chain"/>
    <property type="match status" value="1"/>
</dbReference>
<dbReference type="Gene3D" id="2.170.240.10">
    <property type="entry name" value="Collagen IV, non-collagenous"/>
    <property type="match status" value="1"/>
</dbReference>
<dbReference type="InterPro" id="IPR008160">
    <property type="entry name" value="Collagen"/>
</dbReference>
<dbReference type="InterPro" id="IPR001442">
    <property type="entry name" value="Collagen_IV_NC"/>
</dbReference>
<dbReference type="InterPro" id="IPR036954">
    <property type="entry name" value="Collagen_IV_NC_sf"/>
</dbReference>
<dbReference type="InterPro" id="IPR050149">
    <property type="entry name" value="Collagen_superfamily"/>
</dbReference>
<dbReference type="InterPro" id="IPR016187">
    <property type="entry name" value="CTDL_fold"/>
</dbReference>
<dbReference type="PANTHER" id="PTHR24023:SF1112">
    <property type="entry name" value="COL_CUTICLE_N DOMAIN-CONTAINING PROTEIN-RELATED"/>
    <property type="match status" value="1"/>
</dbReference>
<dbReference type="PANTHER" id="PTHR24023">
    <property type="entry name" value="COLLAGEN ALPHA"/>
    <property type="match status" value="1"/>
</dbReference>
<dbReference type="Pfam" id="PF01413">
    <property type="entry name" value="C4"/>
    <property type="match status" value="2"/>
</dbReference>
<dbReference type="Pfam" id="PF01391">
    <property type="entry name" value="Collagen"/>
    <property type="match status" value="3"/>
</dbReference>
<dbReference type="SMART" id="SM00111">
    <property type="entry name" value="C4"/>
    <property type="match status" value="2"/>
</dbReference>
<dbReference type="SUPFAM" id="SSF56436">
    <property type="entry name" value="C-type lectin-like"/>
    <property type="match status" value="2"/>
</dbReference>
<dbReference type="PROSITE" id="PS51403">
    <property type="entry name" value="NC1_IV"/>
    <property type="match status" value="1"/>
</dbReference>
<protein>
    <recommendedName>
        <fullName>Collagen alpha-3(IV) chain</fullName>
    </recommendedName>
</protein>
<sequence>GLPGRKGPVGDAGPPGQLGVTGPQGAPGFPGVTIPGQKGDRGPPGSRGNPGMPGPPGPPGSPVEGIKGDKGLMGEPGQRGPPGAIGDMGSPGHPGAPGVPGQPGARGDPGFYGFPGMKGKKGNSGFPGPPGPPGQSGPKGPPGVRGEPGTVKIISLPGSPGPPGSAGEPGMQGEPGPPGPPGDPGPCGPKGKPGEDGPPGTPGPTGEKGNKGCKGEQGPPGSDGLPGLKGKPGDTGPPAAGAVMRGFVFTRHSQTTAIPSCPEGTEPLYSGFSLLFVQGNEQAHGQDLGTLGSCLQRFTTMPFLFCNINDVCNFASRNDYSYWLSTPAMIPMDMAPITGRALEPYISRCTVCEGPAIAIAVHSQTTDIPPCPAGWISLWKGFSFIMFTSAGSEGAGQALASPGSCLEEFRASPFIECHGRGTCNYYSNSYSFWLASLDPKRMFRKPIPSTVKAGELENIISRCQVCMKMRP</sequence>
<gene>
    <name type="primary">COL4A3</name>
</gene>
<name>CO4A3_BOVIN</name>
<evidence type="ECO:0000250" key="1"/>
<evidence type="ECO:0000250" key="2">
    <source>
        <dbReference type="UniProtKB" id="Q01955"/>
    </source>
</evidence>
<evidence type="ECO:0000250" key="3">
    <source>
        <dbReference type="UniProtKB" id="Q9QZS0"/>
    </source>
</evidence>
<evidence type="ECO:0000255" key="4"/>
<evidence type="ECO:0000255" key="5">
    <source>
        <dbReference type="PROSITE-ProRule" id="PRU00736"/>
    </source>
</evidence>
<evidence type="ECO:0000256" key="6">
    <source>
        <dbReference type="SAM" id="MobiDB-lite"/>
    </source>
</evidence>
<evidence type="ECO:0000269" key="7">
    <source>
    </source>
</evidence>
<evidence type="ECO:0000269" key="8">
    <source>
    </source>
</evidence>
<evidence type="ECO:0000305" key="9"/>
<reference key="1">
    <citation type="journal article" date="1991" name="J. Biol. Chem.">
        <title>Use of the polymerase chain reaction to clone and sequence a cDNA encoding the bovine alpha 3 chain of type IV collagen.</title>
        <authorList>
            <person name="Morrison K.E."/>
            <person name="Germino G.G."/>
            <person name="Reeders S.T."/>
        </authorList>
    </citation>
    <scope>NUCLEOTIDE SEQUENCE [MRNA]</scope>
    <source>
        <tissue>Lens</tissue>
    </source>
</reference>
<reference key="2">
    <citation type="journal article" date="1990" name="J. Biol. Chem.">
        <title>Glomerular basement membrane. Identification of a fourth chain, alpha 4, of type IV collagen.</title>
        <authorList>
            <person name="Gunwar S."/>
            <person name="Saus J."/>
            <person name="Noelken M.E."/>
            <person name="Hudson B.G."/>
        </authorList>
    </citation>
    <scope>PROTEIN SEQUENCE OF 227-258</scope>
    <source>
        <tissue>Kidney</tissue>
    </source>
</reference>
<reference key="3">
    <citation type="journal article" date="1988" name="J. Biol. Chem.">
        <title>Identification of the Goodpasture antigen as the alpha 3(IV) chain of collagen IV.</title>
        <authorList>
            <person name="Saus J."/>
            <person name="Wieslander J."/>
            <person name="Langeveld J.P.M."/>
            <person name="Quinones S."/>
            <person name="Hudson B.G."/>
        </authorList>
    </citation>
    <scope>PROTEIN SEQUENCE OF 227-254</scope>
    <scope>HYDROXYLATION AT PRO-232 AND PRO-238</scope>
</reference>
<reference key="4">
    <citation type="journal article" date="1987" name="J. Biol. Chem.">
        <title>Localization of the Goodpasture epitope to a novel chain of basement membrane collagen.</title>
        <authorList>
            <person name="Butkowski R.J."/>
            <person name="Langeveld J.P.M."/>
            <person name="Wieslander J."/>
            <person name="Hamilton J."/>
            <person name="Hudson B.G."/>
        </authorList>
    </citation>
    <scope>PROTEIN SEQUENCE OF 227-244</scope>
</reference>
<organism>
    <name type="scientific">Bos taurus</name>
    <name type="common">Bovine</name>
    <dbReference type="NCBI Taxonomy" id="9913"/>
    <lineage>
        <taxon>Eukaryota</taxon>
        <taxon>Metazoa</taxon>
        <taxon>Chordata</taxon>
        <taxon>Craniata</taxon>
        <taxon>Vertebrata</taxon>
        <taxon>Euteleostomi</taxon>
        <taxon>Mammalia</taxon>
        <taxon>Eutheria</taxon>
        <taxon>Laurasiatheria</taxon>
        <taxon>Artiodactyla</taxon>
        <taxon>Ruminantia</taxon>
        <taxon>Pecora</taxon>
        <taxon>Bovidae</taxon>
        <taxon>Bovinae</taxon>
        <taxon>Bos</taxon>
    </lineage>
</organism>